<organism>
    <name type="scientific">Drosophila melanogaster</name>
    <name type="common">Fruit fly</name>
    <dbReference type="NCBI Taxonomy" id="7227"/>
    <lineage>
        <taxon>Eukaryota</taxon>
        <taxon>Metazoa</taxon>
        <taxon>Ecdysozoa</taxon>
        <taxon>Arthropoda</taxon>
        <taxon>Hexapoda</taxon>
        <taxon>Insecta</taxon>
        <taxon>Pterygota</taxon>
        <taxon>Neoptera</taxon>
        <taxon>Endopterygota</taxon>
        <taxon>Diptera</taxon>
        <taxon>Brachycera</taxon>
        <taxon>Muscomorpha</taxon>
        <taxon>Ephydroidea</taxon>
        <taxon>Drosophilidae</taxon>
        <taxon>Drosophila</taxon>
        <taxon>Sophophora</taxon>
    </lineage>
</organism>
<keyword id="KW-0025">Alternative splicing</keyword>
<keyword id="KW-0963">Cytoplasm</keyword>
<keyword id="KW-0378">Hydrolase</keyword>
<keyword id="KW-0539">Nucleus</keyword>
<keyword id="KW-0904">Protein phosphatase</keyword>
<keyword id="KW-1185">Reference proteome</keyword>
<keyword id="KW-0728">SH3 domain</keyword>
<protein>
    <recommendedName>
        <fullName evidence="6">Ecdysteroid-phosphate phosphatase</fullName>
        <ecNumber evidence="5">3.1.3.-</ecNumber>
    </recommendedName>
    <alternativeName>
        <fullName evidence="7">Protein UBASH3A homolog</fullName>
    </alternativeName>
    <alternativeName>
        <fullName evidence="7">Ubiquitin-associated and SH3 domain-containing protein</fullName>
    </alternativeName>
</protein>
<name>EPP_DROME</name>
<comment type="function">
    <text evidence="1 5">Steroid phosphatase that dephosphorylates ecdysteroids such as ecdysone 22-phosphate (E22P), 3-epi-ecdysone 22-phosphate (E22P) and 3-epi-ecdysone 2-phosphate (E2P) (PubMed:17348005). Likely catalyzes the conversion of inactive phosphorylated ecdysteroids into their active forms (By similarity). Shows high activity towards ecdysone 22-phosphate (E22P), but is also significantly active against 3-epi-ecdysone 22-phosphate (E22P) and 3-epi-ecdysone 2-phosphate (E2P) (PubMed:17348005). Also displays acid phosphatase activity towards 4-nitrophenyl phosphate (pNNP) in vitro (PubMed:17348005). Has no activity towards 3-epi-ecdysone 3-phosphate (E3P) (PubMed:17348005).</text>
</comment>
<comment type="catalytic activity">
    <reaction evidence="5">
        <text>ecdysone 22-phosphate + H2O = ecdysone + phosphate</text>
        <dbReference type="Rhea" id="RHEA:63576"/>
        <dbReference type="ChEBI" id="CHEBI:15377"/>
        <dbReference type="ChEBI" id="CHEBI:16688"/>
        <dbReference type="ChEBI" id="CHEBI:43474"/>
        <dbReference type="ChEBI" id="CHEBI:147380"/>
    </reaction>
</comment>
<comment type="catalytic activity">
    <reaction evidence="1">
        <text>20-hydroxyecdysone 22-phosphate + H2O = 20-hydroxyecdysone + phosphate</text>
        <dbReference type="Rhea" id="RHEA:63580"/>
        <dbReference type="ChEBI" id="CHEBI:15377"/>
        <dbReference type="ChEBI" id="CHEBI:16587"/>
        <dbReference type="ChEBI" id="CHEBI:43474"/>
        <dbReference type="ChEBI" id="CHEBI:147382"/>
    </reaction>
</comment>
<comment type="catalytic activity">
    <reaction evidence="1">
        <text>2-deoxyecdysone 22-phosphate + H2O = 2-deoxyecdysone + phosphate</text>
        <dbReference type="Rhea" id="RHEA:63584"/>
        <dbReference type="ChEBI" id="CHEBI:15377"/>
        <dbReference type="ChEBI" id="CHEBI:19566"/>
        <dbReference type="ChEBI" id="CHEBI:43474"/>
        <dbReference type="ChEBI" id="CHEBI:147386"/>
    </reaction>
</comment>
<comment type="biophysicochemical properties">
    <phDependence>
        <text evidence="5">Active at pH 4 and 7.4 with ecdysone 22-phosphate (E22P), 3-epi-ecdysone 22-phosphate (E22P) or 3-epi-ecdysone 2-phosphate (E2P) as substrate.</text>
    </phDependence>
</comment>
<comment type="subcellular location">
    <subcellularLocation>
        <location evidence="5">Cytoplasm</location>
        <location evidence="5">Cytosol</location>
    </subcellularLocation>
    <subcellularLocation>
        <location evidence="5">Nucleus</location>
    </subcellularLocation>
</comment>
<comment type="alternative products">
    <event type="alternative splicing"/>
    <isoform>
        <id>Q9VCE9-1</id>
        <name evidence="9">A</name>
        <name evidence="6">long</name>
        <sequence type="displayed"/>
    </isoform>
    <isoform>
        <id>Q9VCE9-2</id>
        <name evidence="9">B</name>
        <name evidence="9">C</name>
        <sequence type="described" ref="VSP_061772"/>
    </isoform>
</comment>
<accession>Q9VCE9</accession>
<accession>Q86PB2</accession>
<proteinExistence type="evidence at protein level"/>
<dbReference type="EC" id="3.1.3.-" evidence="5"/>
<dbReference type="EMBL" id="AE014297">
    <property type="protein sequence ID" value="AAF56217.1"/>
    <property type="molecule type" value="Genomic_DNA"/>
</dbReference>
<dbReference type="EMBL" id="AE014297">
    <property type="protein sequence ID" value="ABW08745.1"/>
    <property type="molecule type" value="Genomic_DNA"/>
</dbReference>
<dbReference type="EMBL" id="AE014297">
    <property type="protein sequence ID" value="ABW08746.1"/>
    <property type="molecule type" value="Genomic_DNA"/>
</dbReference>
<dbReference type="EMBL" id="AY051411">
    <property type="protein sequence ID" value="AAK92835.1"/>
    <property type="molecule type" value="mRNA"/>
</dbReference>
<dbReference type="EMBL" id="BT003239">
    <property type="protein sequence ID" value="AAO24996.1"/>
    <property type="molecule type" value="mRNA"/>
</dbReference>
<dbReference type="RefSeq" id="NP_001097896.1">
    <molecule id="Q9VCE9-2"/>
    <property type="nucleotide sequence ID" value="NM_001104426.1"/>
</dbReference>
<dbReference type="RefSeq" id="NP_001097897.1">
    <molecule id="Q9VCE9-2"/>
    <property type="nucleotide sequence ID" value="NM_001104427.1"/>
</dbReference>
<dbReference type="RefSeq" id="NP_651202.1">
    <molecule id="Q9VCE9-1"/>
    <property type="nucleotide sequence ID" value="NM_142945.3"/>
</dbReference>
<dbReference type="SMR" id="Q9VCE9"/>
<dbReference type="BioGRID" id="67775">
    <property type="interactions" value="4"/>
</dbReference>
<dbReference type="DIP" id="DIP-21366N"/>
<dbReference type="FunCoup" id="Q9VCE9">
    <property type="interactions" value="1394"/>
</dbReference>
<dbReference type="IntAct" id="Q9VCE9">
    <property type="interactions" value="1"/>
</dbReference>
<dbReference type="STRING" id="7227.FBpp0303396"/>
<dbReference type="PaxDb" id="7227-FBpp0083896"/>
<dbReference type="DNASU" id="42840"/>
<dbReference type="EnsemblMetazoa" id="FBtr0084509">
    <molecule id="Q9VCE9-1"/>
    <property type="protein sequence ID" value="FBpp0083896"/>
    <property type="gene ID" value="FBgn0039137"/>
</dbReference>
<dbReference type="EnsemblMetazoa" id="FBtr0113275">
    <molecule id="Q9VCE9-2"/>
    <property type="protein sequence ID" value="FBpp0112187"/>
    <property type="gene ID" value="FBgn0039137"/>
</dbReference>
<dbReference type="EnsemblMetazoa" id="FBtr0113276">
    <molecule id="Q9VCE9-2"/>
    <property type="protein sequence ID" value="FBpp0112188"/>
    <property type="gene ID" value="FBgn0039137"/>
</dbReference>
<dbReference type="GeneID" id="42840"/>
<dbReference type="KEGG" id="dme:Dmel_CG13604"/>
<dbReference type="UCSC" id="CG13604-RA">
    <property type="organism name" value="d. melanogaster"/>
</dbReference>
<dbReference type="AGR" id="FB:FBgn0039137"/>
<dbReference type="CTD" id="42840"/>
<dbReference type="FlyBase" id="FBgn0039137">
    <property type="gene designation" value="Epp"/>
</dbReference>
<dbReference type="VEuPathDB" id="VectorBase:FBgn0039137"/>
<dbReference type="eggNOG" id="KOG3734">
    <property type="taxonomic scope" value="Eukaryota"/>
</dbReference>
<dbReference type="GeneTree" id="ENSGT00940000167071"/>
<dbReference type="InParanoid" id="Q9VCE9"/>
<dbReference type="OMA" id="NMPKEIP"/>
<dbReference type="OrthoDB" id="414418at2759"/>
<dbReference type="PhylomeDB" id="Q9VCE9"/>
<dbReference type="BioGRID-ORCS" id="42840">
    <property type="hits" value="0 hits in 3 CRISPR screens"/>
</dbReference>
<dbReference type="GenomeRNAi" id="42840"/>
<dbReference type="PRO" id="PR:Q9VCE9"/>
<dbReference type="Proteomes" id="UP000000803">
    <property type="component" value="Chromosome 3R"/>
</dbReference>
<dbReference type="Bgee" id="FBgn0039137">
    <property type="expression patterns" value="Expressed in adult anterior midgut class II enteroendocrine cell in adult midgut (Drosophila) and 60 other cell types or tissues"/>
</dbReference>
<dbReference type="ExpressionAtlas" id="Q9VCE9">
    <property type="expression patterns" value="baseline and differential"/>
</dbReference>
<dbReference type="GO" id="GO:0005829">
    <property type="term" value="C:cytosol"/>
    <property type="evidence" value="ECO:0000314"/>
    <property type="project" value="UniProtKB"/>
</dbReference>
<dbReference type="GO" id="GO:0005634">
    <property type="term" value="C:nucleus"/>
    <property type="evidence" value="ECO:0000314"/>
    <property type="project" value="UniProtKB"/>
</dbReference>
<dbReference type="GO" id="GO:0003993">
    <property type="term" value="F:acid phosphatase activity"/>
    <property type="evidence" value="ECO:0000314"/>
    <property type="project" value="UniProtKB"/>
</dbReference>
<dbReference type="GO" id="GO:0102531">
    <property type="term" value="F:ecdysteroid-phosphate phosphatase activity"/>
    <property type="evidence" value="ECO:0000314"/>
    <property type="project" value="FlyBase"/>
</dbReference>
<dbReference type="GO" id="GO:0016791">
    <property type="term" value="F:phosphatase activity"/>
    <property type="evidence" value="ECO:0000250"/>
    <property type="project" value="FlyBase"/>
</dbReference>
<dbReference type="GO" id="GO:0004721">
    <property type="term" value="F:phosphoprotein phosphatase activity"/>
    <property type="evidence" value="ECO:0007669"/>
    <property type="project" value="UniProtKB-KW"/>
</dbReference>
<dbReference type="GO" id="GO:0045455">
    <property type="term" value="P:ecdysteroid metabolic process"/>
    <property type="evidence" value="ECO:0000314"/>
    <property type="project" value="FlyBase"/>
</dbReference>
<dbReference type="CDD" id="cd07067">
    <property type="entry name" value="HP_PGM_like"/>
    <property type="match status" value="1"/>
</dbReference>
<dbReference type="CDD" id="cd11791">
    <property type="entry name" value="SH3_UBASH3"/>
    <property type="match status" value="1"/>
</dbReference>
<dbReference type="CDD" id="cd14301">
    <property type="entry name" value="UBA_UBS3B"/>
    <property type="match status" value="1"/>
</dbReference>
<dbReference type="FunFam" id="3.40.50.1240:FF:000032">
    <property type="entry name" value="Blast:Protein UBASH3A homolog"/>
    <property type="match status" value="1"/>
</dbReference>
<dbReference type="FunFam" id="2.30.30.40:FF:000052">
    <property type="entry name" value="Ubiquitin-associated and SH3 domain-containing protein B"/>
    <property type="match status" value="1"/>
</dbReference>
<dbReference type="FunFam" id="1.10.8.10:FF:000053">
    <property type="entry name" value="Ubiquitin-associated and SH3 domain-containing, A"/>
    <property type="match status" value="1"/>
</dbReference>
<dbReference type="Gene3D" id="1.10.8.10">
    <property type="entry name" value="DNA helicase RuvA subunit, C-terminal domain"/>
    <property type="match status" value="1"/>
</dbReference>
<dbReference type="Gene3D" id="3.40.50.1240">
    <property type="entry name" value="Phosphoglycerate mutase-like"/>
    <property type="match status" value="1"/>
</dbReference>
<dbReference type="Gene3D" id="2.30.30.40">
    <property type="entry name" value="SH3 Domains"/>
    <property type="match status" value="1"/>
</dbReference>
<dbReference type="InterPro" id="IPR013078">
    <property type="entry name" value="His_Pase_superF_clade-1"/>
</dbReference>
<dbReference type="InterPro" id="IPR029033">
    <property type="entry name" value="His_PPase_superfam"/>
</dbReference>
<dbReference type="InterPro" id="IPR051710">
    <property type="entry name" value="Phosphatase_SH3-domain"/>
</dbReference>
<dbReference type="InterPro" id="IPR036028">
    <property type="entry name" value="SH3-like_dom_sf"/>
</dbReference>
<dbReference type="InterPro" id="IPR001452">
    <property type="entry name" value="SH3_domain"/>
</dbReference>
<dbReference type="InterPro" id="IPR015940">
    <property type="entry name" value="UBA"/>
</dbReference>
<dbReference type="InterPro" id="IPR009060">
    <property type="entry name" value="UBA-like_sf"/>
</dbReference>
<dbReference type="PANTHER" id="PTHR16469">
    <property type="entry name" value="UBIQUITIN-ASSOCIATED AND SH3 DOMAIN-CONTAINING BA-RELATED"/>
    <property type="match status" value="1"/>
</dbReference>
<dbReference type="PANTHER" id="PTHR16469:SF27">
    <property type="entry name" value="UBIQUITIN-ASSOCIATED AND SH3 DOMAIN-CONTAINING BA-RELATED"/>
    <property type="match status" value="1"/>
</dbReference>
<dbReference type="Pfam" id="PF00300">
    <property type="entry name" value="His_Phos_1"/>
    <property type="match status" value="1"/>
</dbReference>
<dbReference type="Pfam" id="PF14604">
    <property type="entry name" value="SH3_9"/>
    <property type="match status" value="1"/>
</dbReference>
<dbReference type="Pfam" id="PF22562">
    <property type="entry name" value="UBA_7"/>
    <property type="match status" value="1"/>
</dbReference>
<dbReference type="SMART" id="SM00165">
    <property type="entry name" value="UBA"/>
    <property type="match status" value="1"/>
</dbReference>
<dbReference type="SUPFAM" id="SSF53254">
    <property type="entry name" value="Phosphoglycerate mutase-like"/>
    <property type="match status" value="1"/>
</dbReference>
<dbReference type="SUPFAM" id="SSF50044">
    <property type="entry name" value="SH3-domain"/>
    <property type="match status" value="1"/>
</dbReference>
<dbReference type="SUPFAM" id="SSF46934">
    <property type="entry name" value="UBA-like"/>
    <property type="match status" value="1"/>
</dbReference>
<dbReference type="PROSITE" id="PS50002">
    <property type="entry name" value="SH3"/>
    <property type="match status" value="1"/>
</dbReference>
<dbReference type="PROSITE" id="PS50030">
    <property type="entry name" value="UBA"/>
    <property type="match status" value="1"/>
</dbReference>
<reference key="1">
    <citation type="journal article" date="2000" name="Science">
        <title>The genome sequence of Drosophila melanogaster.</title>
        <authorList>
            <person name="Adams M.D."/>
            <person name="Celniker S.E."/>
            <person name="Holt R.A."/>
            <person name="Evans C.A."/>
            <person name="Gocayne J.D."/>
            <person name="Amanatides P.G."/>
            <person name="Scherer S.E."/>
            <person name="Li P.W."/>
            <person name="Hoskins R.A."/>
            <person name="Galle R.F."/>
            <person name="George R.A."/>
            <person name="Lewis S.E."/>
            <person name="Richards S."/>
            <person name="Ashburner M."/>
            <person name="Henderson S.N."/>
            <person name="Sutton G.G."/>
            <person name="Wortman J.R."/>
            <person name="Yandell M.D."/>
            <person name="Zhang Q."/>
            <person name="Chen L.X."/>
            <person name="Brandon R.C."/>
            <person name="Rogers Y.-H.C."/>
            <person name="Blazej R.G."/>
            <person name="Champe M."/>
            <person name="Pfeiffer B.D."/>
            <person name="Wan K.H."/>
            <person name="Doyle C."/>
            <person name="Baxter E.G."/>
            <person name="Helt G."/>
            <person name="Nelson C.R."/>
            <person name="Miklos G.L.G."/>
            <person name="Abril J.F."/>
            <person name="Agbayani A."/>
            <person name="An H.-J."/>
            <person name="Andrews-Pfannkoch C."/>
            <person name="Baldwin D."/>
            <person name="Ballew R.M."/>
            <person name="Basu A."/>
            <person name="Baxendale J."/>
            <person name="Bayraktaroglu L."/>
            <person name="Beasley E.M."/>
            <person name="Beeson K.Y."/>
            <person name="Benos P.V."/>
            <person name="Berman B.P."/>
            <person name="Bhandari D."/>
            <person name="Bolshakov S."/>
            <person name="Borkova D."/>
            <person name="Botchan M.R."/>
            <person name="Bouck J."/>
            <person name="Brokstein P."/>
            <person name="Brottier P."/>
            <person name="Burtis K.C."/>
            <person name="Busam D.A."/>
            <person name="Butler H."/>
            <person name="Cadieu E."/>
            <person name="Center A."/>
            <person name="Chandra I."/>
            <person name="Cherry J.M."/>
            <person name="Cawley S."/>
            <person name="Dahlke C."/>
            <person name="Davenport L.B."/>
            <person name="Davies P."/>
            <person name="de Pablos B."/>
            <person name="Delcher A."/>
            <person name="Deng Z."/>
            <person name="Mays A.D."/>
            <person name="Dew I."/>
            <person name="Dietz S.M."/>
            <person name="Dodson K."/>
            <person name="Doup L.E."/>
            <person name="Downes M."/>
            <person name="Dugan-Rocha S."/>
            <person name="Dunkov B.C."/>
            <person name="Dunn P."/>
            <person name="Durbin K.J."/>
            <person name="Evangelista C.C."/>
            <person name="Ferraz C."/>
            <person name="Ferriera S."/>
            <person name="Fleischmann W."/>
            <person name="Fosler C."/>
            <person name="Gabrielian A.E."/>
            <person name="Garg N.S."/>
            <person name="Gelbart W.M."/>
            <person name="Glasser K."/>
            <person name="Glodek A."/>
            <person name="Gong F."/>
            <person name="Gorrell J.H."/>
            <person name="Gu Z."/>
            <person name="Guan P."/>
            <person name="Harris M."/>
            <person name="Harris N.L."/>
            <person name="Harvey D.A."/>
            <person name="Heiman T.J."/>
            <person name="Hernandez J.R."/>
            <person name="Houck J."/>
            <person name="Hostin D."/>
            <person name="Houston K.A."/>
            <person name="Howland T.J."/>
            <person name="Wei M.-H."/>
            <person name="Ibegwam C."/>
            <person name="Jalali M."/>
            <person name="Kalush F."/>
            <person name="Karpen G.H."/>
            <person name="Ke Z."/>
            <person name="Kennison J.A."/>
            <person name="Ketchum K.A."/>
            <person name="Kimmel B.E."/>
            <person name="Kodira C.D."/>
            <person name="Kraft C.L."/>
            <person name="Kravitz S."/>
            <person name="Kulp D."/>
            <person name="Lai Z."/>
            <person name="Lasko P."/>
            <person name="Lei Y."/>
            <person name="Levitsky A.A."/>
            <person name="Li J.H."/>
            <person name="Li Z."/>
            <person name="Liang Y."/>
            <person name="Lin X."/>
            <person name="Liu X."/>
            <person name="Mattei B."/>
            <person name="McIntosh T.C."/>
            <person name="McLeod M.P."/>
            <person name="McPherson D."/>
            <person name="Merkulov G."/>
            <person name="Milshina N.V."/>
            <person name="Mobarry C."/>
            <person name="Morris J."/>
            <person name="Moshrefi A."/>
            <person name="Mount S.M."/>
            <person name="Moy M."/>
            <person name="Murphy B."/>
            <person name="Murphy L."/>
            <person name="Muzny D.M."/>
            <person name="Nelson D.L."/>
            <person name="Nelson D.R."/>
            <person name="Nelson K.A."/>
            <person name="Nixon K."/>
            <person name="Nusskern D.R."/>
            <person name="Pacleb J.M."/>
            <person name="Palazzolo M."/>
            <person name="Pittman G.S."/>
            <person name="Pan S."/>
            <person name="Pollard J."/>
            <person name="Puri V."/>
            <person name="Reese M.G."/>
            <person name="Reinert K."/>
            <person name="Remington K."/>
            <person name="Saunders R.D.C."/>
            <person name="Scheeler F."/>
            <person name="Shen H."/>
            <person name="Shue B.C."/>
            <person name="Siden-Kiamos I."/>
            <person name="Simpson M."/>
            <person name="Skupski M.P."/>
            <person name="Smith T.J."/>
            <person name="Spier E."/>
            <person name="Spradling A.C."/>
            <person name="Stapleton M."/>
            <person name="Strong R."/>
            <person name="Sun E."/>
            <person name="Svirskas R."/>
            <person name="Tector C."/>
            <person name="Turner R."/>
            <person name="Venter E."/>
            <person name="Wang A.H."/>
            <person name="Wang X."/>
            <person name="Wang Z.-Y."/>
            <person name="Wassarman D.A."/>
            <person name="Weinstock G.M."/>
            <person name="Weissenbach J."/>
            <person name="Williams S.M."/>
            <person name="Woodage T."/>
            <person name="Worley K.C."/>
            <person name="Wu D."/>
            <person name="Yang S."/>
            <person name="Yao Q.A."/>
            <person name="Ye J."/>
            <person name="Yeh R.-F."/>
            <person name="Zaveri J.S."/>
            <person name="Zhan M."/>
            <person name="Zhang G."/>
            <person name="Zhao Q."/>
            <person name="Zheng L."/>
            <person name="Zheng X.H."/>
            <person name="Zhong F.N."/>
            <person name="Zhong W."/>
            <person name="Zhou X."/>
            <person name="Zhu S.C."/>
            <person name="Zhu X."/>
            <person name="Smith H.O."/>
            <person name="Gibbs R.A."/>
            <person name="Myers E.W."/>
            <person name="Rubin G.M."/>
            <person name="Venter J.C."/>
        </authorList>
    </citation>
    <scope>NUCLEOTIDE SEQUENCE [LARGE SCALE GENOMIC DNA]</scope>
    <source>
        <strain>Berkeley</strain>
    </source>
</reference>
<reference key="2">
    <citation type="journal article" date="2002" name="Genome Biol.">
        <title>Annotation of the Drosophila melanogaster euchromatic genome: a systematic review.</title>
        <authorList>
            <person name="Misra S."/>
            <person name="Crosby M.A."/>
            <person name="Mungall C.J."/>
            <person name="Matthews B.B."/>
            <person name="Campbell K.S."/>
            <person name="Hradecky P."/>
            <person name="Huang Y."/>
            <person name="Kaminker J.S."/>
            <person name="Millburn G.H."/>
            <person name="Prochnik S.E."/>
            <person name="Smith C.D."/>
            <person name="Tupy J.L."/>
            <person name="Whitfield E.J."/>
            <person name="Bayraktaroglu L."/>
            <person name="Berman B.P."/>
            <person name="Bettencourt B.R."/>
            <person name="Celniker S.E."/>
            <person name="de Grey A.D.N.J."/>
            <person name="Drysdale R.A."/>
            <person name="Harris N.L."/>
            <person name="Richter J."/>
            <person name="Russo S."/>
            <person name="Schroeder A.J."/>
            <person name="Shu S.Q."/>
            <person name="Stapleton M."/>
            <person name="Yamada C."/>
            <person name="Ashburner M."/>
            <person name="Gelbart W.M."/>
            <person name="Rubin G.M."/>
            <person name="Lewis S.E."/>
        </authorList>
    </citation>
    <scope>GENOME REANNOTATION</scope>
    <source>
        <strain>Berkeley</strain>
    </source>
</reference>
<reference key="3">
    <citation type="journal article" date="2002" name="Genome Biol.">
        <title>A Drosophila full-length cDNA resource.</title>
        <authorList>
            <person name="Stapleton M."/>
            <person name="Carlson J.W."/>
            <person name="Brokstein P."/>
            <person name="Yu C."/>
            <person name="Champe M."/>
            <person name="George R.A."/>
            <person name="Guarin H."/>
            <person name="Kronmiller B."/>
            <person name="Pacleb J.M."/>
            <person name="Park S."/>
            <person name="Wan K.H."/>
            <person name="Rubin G.M."/>
            <person name="Celniker S.E."/>
        </authorList>
    </citation>
    <scope>NUCLEOTIDE SEQUENCE [LARGE SCALE MRNA] (ISOFORM A)</scope>
    <source>
        <strain>Berkeley</strain>
        <tissue>Head</tissue>
    </source>
</reference>
<reference evidence="8" key="4">
    <citation type="submission" date="2003-01" db="EMBL/GenBank/DDBJ databases">
        <authorList>
            <person name="Stapleton M."/>
            <person name="Brokstein P."/>
            <person name="Hong L."/>
            <person name="Agbayani A."/>
            <person name="Carlson J."/>
            <person name="Champe M."/>
            <person name="Chavez C."/>
            <person name="Dorsett V."/>
            <person name="Dresnek D."/>
            <person name="Farfan D."/>
            <person name="Frise E."/>
            <person name="George R."/>
            <person name="Gonzalez M."/>
            <person name="Guarin H."/>
            <person name="Kronmiller B."/>
            <person name="Li P."/>
            <person name="Liao G."/>
            <person name="Miranda A."/>
            <person name="Mungall C.J."/>
            <person name="Nunoo J."/>
            <person name="Pacleb J."/>
            <person name="Paragas V."/>
            <person name="Park S."/>
            <person name="Patel S."/>
            <person name="Phouanenavong S."/>
            <person name="Wan K."/>
            <person name="Yu C."/>
            <person name="Lewis S.E."/>
            <person name="Rubin G.M."/>
            <person name="Celniker S."/>
        </authorList>
    </citation>
    <scope>NUCLEOTIDE SEQUENCE [LARGE SCALE MRNA] (ISOFORM B)</scope>
    <source>
        <strain evidence="8">Berkeley</strain>
        <tissue evidence="8">Embryo</tissue>
    </source>
</reference>
<reference key="5">
    <citation type="journal article" date="2007" name="Proteins">
        <title>An unsuspected ecdysteroid/steroid phosphatase activity in the key T-cell regulator, Sts-1: surprising relationship to insect ecdysteroid phosphate phosphatase.</title>
        <authorList>
            <person name="Davies L."/>
            <person name="Anderson I.P."/>
            <person name="Turner P.C."/>
            <person name="Shirras A.D."/>
            <person name="Rees H.H."/>
            <person name="Rigden D.J."/>
        </authorList>
    </citation>
    <scope>FUNCTION</scope>
    <scope>CATALYTIC ACTIVITY</scope>
    <scope>BIOPHYSICOCHEMICAL PROPERTIES</scope>
    <scope>SUBCELLULAR LOCATION</scope>
</reference>
<evidence type="ECO:0000250" key="1">
    <source>
        <dbReference type="UniProtKB" id="Q7YTB0"/>
    </source>
</evidence>
<evidence type="ECO:0000255" key="2">
    <source>
        <dbReference type="PROSITE-ProRule" id="PRU00192"/>
    </source>
</evidence>
<evidence type="ECO:0000255" key="3">
    <source>
        <dbReference type="PROSITE-ProRule" id="PRU00212"/>
    </source>
</evidence>
<evidence type="ECO:0000256" key="4">
    <source>
        <dbReference type="SAM" id="MobiDB-lite"/>
    </source>
</evidence>
<evidence type="ECO:0000269" key="5">
    <source>
    </source>
</evidence>
<evidence type="ECO:0000303" key="6">
    <source>
    </source>
</evidence>
<evidence type="ECO:0000305" key="7"/>
<evidence type="ECO:0000312" key="8">
    <source>
        <dbReference type="EMBL" id="AAO24996.1"/>
    </source>
</evidence>
<evidence type="ECO:0000312" key="9">
    <source>
        <dbReference type="FlyBase" id="FBgn0039137"/>
    </source>
</evidence>
<feature type="chain" id="PRO_0000210995" description="Ecdysteroid-phosphate phosphatase">
    <location>
        <begin position="1"/>
        <end position="751"/>
    </location>
</feature>
<feature type="domain" description="UBA" evidence="3">
    <location>
        <begin position="16"/>
        <end position="60"/>
    </location>
</feature>
<feature type="domain" description="SH3" evidence="2">
    <location>
        <begin position="271"/>
        <end position="336"/>
    </location>
</feature>
<feature type="region of interest" description="Disordered" evidence="4">
    <location>
        <begin position="367"/>
        <end position="394"/>
    </location>
</feature>
<feature type="region of interest" description="Disordered" evidence="4">
    <location>
        <begin position="458"/>
        <end position="484"/>
    </location>
</feature>
<feature type="region of interest" description="Phosphatase-like">
    <location>
        <begin position="490"/>
        <end position="751"/>
    </location>
</feature>
<feature type="compositionally biased region" description="Basic and acidic residues" evidence="4">
    <location>
        <begin position="466"/>
        <end position="479"/>
    </location>
</feature>
<feature type="active site" evidence="1">
    <location>
        <position position="498"/>
    </location>
</feature>
<feature type="active site" description="Tele-phosphohistidine intermediate" evidence="1">
    <location>
        <position position="499"/>
    </location>
</feature>
<feature type="active site" evidence="1">
    <location>
        <position position="681"/>
    </location>
</feature>
<feature type="splice variant" id="VSP_061772" description="In isoform B.">
    <location>
        <begin position="1"/>
        <end position="439"/>
    </location>
</feature>
<sequence length="751" mass="84466">MATLPPRKSQTPTRICISKQHLTPLQTLLQMGFPRHRAEKALASTGNRGVQIASDWLLAHVNDGTLDECAPREYIIYACPTGPFLQQLEEFWAKSRQMCGWNGAHNYVPHITLVSFFKAPDECSLQLSKALKQVVDMTGALLDRPLKLEPYMSQNFMGFFVAEEDANYLKRLALQYVKEVSNSIISDTYEQLDAIVACFPWCGAVSSGTRCIPRSSRSISLEPHVKSLHLTLAYQFPQAQFNALKALVETLDASCASNWELRLYSRDPRLATKQVQKVVYPHNPHETDELELRIGDYIYLNTEVVDSSSDGWAEGISWLTGSTGHLPVNYTERTAESDAWTLHRVVQLSKSVASSLTSAEDLDIVDGRSISTEPDDRQNTAHPDIIEGSSFEESEQSVEKYLRQTLKPCLELPSVQLLNSHNLTHQHNPNTPTIEITTNMSSSSTSMSKQPVDEILVEPPAAQPPRPDDTLSVHSDHSLHPGSLDASHAKNRKIYIMRHGERVDFTFGTWIPYCFDEFGNYMRKDLNMPKTLPRRKNSPEGWQNDSPLTNVGVYQANLIGQALLEAQVQIDHVYCSPSYRCIQTCTSALEGLKLTGKQKIKLEPGLFEWMAWYPSGVPDWLTKNELTEAKFDVDLDYEPVQPASELTARLKESTEQFYERNHDVILQLLEQTTGNILVVAHATTLDTCSRQLTGGVPRSTNELRQVIHKIPYCSLATVEQVDGVWKLVEPECLPVTHSKNPRFEWNALSAT</sequence>
<gene>
    <name evidence="6 9" type="primary">Epp</name>
    <name evidence="9" type="ORF">CG13604</name>
</gene>